<feature type="chain" id="PRO_0000075962" description="D-lactate dehydrogenase">
    <location>
        <begin position="1"/>
        <end position="330"/>
    </location>
</feature>
<feature type="active site" evidence="1">
    <location>
        <position position="235"/>
    </location>
</feature>
<feature type="active site" evidence="1">
    <location>
        <position position="264"/>
    </location>
</feature>
<feature type="active site" description="Proton donor" evidence="1">
    <location>
        <position position="296"/>
    </location>
</feature>
<feature type="binding site" evidence="2">
    <location>
        <begin position="156"/>
        <end position="157"/>
    </location>
    <ligand>
        <name>NAD(+)</name>
        <dbReference type="ChEBI" id="CHEBI:57540"/>
    </ligand>
</feature>
<feature type="binding site" evidence="1">
    <location>
        <position position="176"/>
    </location>
    <ligand>
        <name>NAD(+)</name>
        <dbReference type="ChEBI" id="CHEBI:57540"/>
    </ligand>
</feature>
<feature type="binding site" evidence="2">
    <location>
        <begin position="206"/>
        <end position="207"/>
    </location>
    <ligand>
        <name>NAD(+)</name>
        <dbReference type="ChEBI" id="CHEBI:57540"/>
    </ligand>
</feature>
<feature type="binding site" evidence="2">
    <location>
        <begin position="233"/>
        <end position="235"/>
    </location>
    <ligand>
        <name>NAD(+)</name>
        <dbReference type="ChEBI" id="CHEBI:57540"/>
    </ligand>
</feature>
<feature type="binding site" evidence="2">
    <location>
        <position position="259"/>
    </location>
    <ligand>
        <name>NAD(+)</name>
        <dbReference type="ChEBI" id="CHEBI:57540"/>
    </ligand>
</feature>
<reference key="1">
    <citation type="journal article" date="2004" name="Proc. Natl. Acad. Sci. U.S.A.">
        <title>Complete genomes of two clinical Staphylococcus aureus strains: evidence for the rapid evolution of virulence and drug resistance.</title>
        <authorList>
            <person name="Holden M.T.G."/>
            <person name="Feil E.J."/>
            <person name="Lindsay J.A."/>
            <person name="Peacock S.J."/>
            <person name="Day N.P.J."/>
            <person name="Enright M.C."/>
            <person name="Foster T.J."/>
            <person name="Moore C.E."/>
            <person name="Hurst L."/>
            <person name="Atkin R."/>
            <person name="Barron A."/>
            <person name="Bason N."/>
            <person name="Bentley S.D."/>
            <person name="Chillingworth C."/>
            <person name="Chillingworth T."/>
            <person name="Churcher C."/>
            <person name="Clark L."/>
            <person name="Corton C."/>
            <person name="Cronin A."/>
            <person name="Doggett J."/>
            <person name="Dowd L."/>
            <person name="Feltwell T."/>
            <person name="Hance Z."/>
            <person name="Harris B."/>
            <person name="Hauser H."/>
            <person name="Holroyd S."/>
            <person name="Jagels K."/>
            <person name="James K.D."/>
            <person name="Lennard N."/>
            <person name="Line A."/>
            <person name="Mayes R."/>
            <person name="Moule S."/>
            <person name="Mungall K."/>
            <person name="Ormond D."/>
            <person name="Quail M.A."/>
            <person name="Rabbinowitsch E."/>
            <person name="Rutherford K.M."/>
            <person name="Sanders M."/>
            <person name="Sharp S."/>
            <person name="Simmonds M."/>
            <person name="Stevens K."/>
            <person name="Whitehead S."/>
            <person name="Barrell B.G."/>
            <person name="Spratt B.G."/>
            <person name="Parkhill J."/>
        </authorList>
    </citation>
    <scope>NUCLEOTIDE SEQUENCE [LARGE SCALE GENOMIC DNA]</scope>
    <source>
        <strain>MRSA252</strain>
    </source>
</reference>
<comment type="catalytic activity">
    <reaction>
        <text>(R)-lactate + NAD(+) = pyruvate + NADH + H(+)</text>
        <dbReference type="Rhea" id="RHEA:16369"/>
        <dbReference type="ChEBI" id="CHEBI:15361"/>
        <dbReference type="ChEBI" id="CHEBI:15378"/>
        <dbReference type="ChEBI" id="CHEBI:16004"/>
        <dbReference type="ChEBI" id="CHEBI:57540"/>
        <dbReference type="ChEBI" id="CHEBI:57945"/>
        <dbReference type="EC" id="1.1.1.28"/>
    </reaction>
</comment>
<comment type="similarity">
    <text evidence="3">Belongs to the D-isomer specific 2-hydroxyacid dehydrogenase family.</text>
</comment>
<accession>Q6GDS2</accession>
<gene>
    <name type="primary">ldhD</name>
    <name type="synonym">ddh</name>
    <name type="ordered locus">SAR2605</name>
</gene>
<evidence type="ECO:0000250" key="1">
    <source>
        <dbReference type="UniProtKB" id="P26297"/>
    </source>
</evidence>
<evidence type="ECO:0000250" key="2">
    <source>
        <dbReference type="UniProtKB" id="P30901"/>
    </source>
</evidence>
<evidence type="ECO:0000305" key="3"/>
<keyword id="KW-0520">NAD</keyword>
<keyword id="KW-0560">Oxidoreductase</keyword>
<sequence length="330" mass="36756">MTKIMFFGTRDYEKEMALNWGKKNNVEVTTSKELLSSATVDQLKDYDGVTTMQFGKLENDVYPKLESYGIKQIAQRTAGFDMYDLDLAKKHNIVISNVPSYSPETIAEYSVSIALQLVRRFPDIERRVQAHDFTWQAEIMSKPVKNMTVAIIGTGRIGAATAKIYAGFGATITAYDAYPNKDLDFLTYKDSVKEAIKDADIISLHVPANKESYHLFDKTMFDHVKKGAILVNAARGAVINTPDLIDAVNDGTLLGAAIDTYENEAAYFTNDWTNKDIDDKTLLELIEHERILVTPHIAFFSDEAVQNLVEGGLNAALSVINTGTCETRLN</sequence>
<proteinExistence type="inferred from homology"/>
<name>LDHD_STAAR</name>
<organism>
    <name type="scientific">Staphylococcus aureus (strain MRSA252)</name>
    <dbReference type="NCBI Taxonomy" id="282458"/>
    <lineage>
        <taxon>Bacteria</taxon>
        <taxon>Bacillati</taxon>
        <taxon>Bacillota</taxon>
        <taxon>Bacilli</taxon>
        <taxon>Bacillales</taxon>
        <taxon>Staphylococcaceae</taxon>
        <taxon>Staphylococcus</taxon>
    </lineage>
</organism>
<dbReference type="EC" id="1.1.1.28"/>
<dbReference type="EMBL" id="BX571856">
    <property type="protein sequence ID" value="CAG41584.1"/>
    <property type="molecule type" value="Genomic_DNA"/>
</dbReference>
<dbReference type="RefSeq" id="WP_000161541.1">
    <property type="nucleotide sequence ID" value="NC_002952.2"/>
</dbReference>
<dbReference type="SMR" id="Q6GDS2"/>
<dbReference type="KEGG" id="sar:SAR2605"/>
<dbReference type="HOGENOM" id="CLU_019796_1_1_9"/>
<dbReference type="Proteomes" id="UP000000596">
    <property type="component" value="Chromosome"/>
</dbReference>
<dbReference type="GO" id="GO:0008720">
    <property type="term" value="F:D-lactate dehydrogenase activity"/>
    <property type="evidence" value="ECO:0007669"/>
    <property type="project" value="UniProtKB-EC"/>
</dbReference>
<dbReference type="GO" id="GO:0051287">
    <property type="term" value="F:NAD binding"/>
    <property type="evidence" value="ECO:0007669"/>
    <property type="project" value="InterPro"/>
</dbReference>
<dbReference type="CDD" id="cd12186">
    <property type="entry name" value="LDH"/>
    <property type="match status" value="1"/>
</dbReference>
<dbReference type="Gene3D" id="3.40.50.720">
    <property type="entry name" value="NAD(P)-binding Rossmann-like Domain"/>
    <property type="match status" value="2"/>
</dbReference>
<dbReference type="InterPro" id="IPR006139">
    <property type="entry name" value="D-isomer_2_OHA_DH_cat_dom"/>
</dbReference>
<dbReference type="InterPro" id="IPR029753">
    <property type="entry name" value="D-isomer_DH_CS"/>
</dbReference>
<dbReference type="InterPro" id="IPR029752">
    <property type="entry name" value="D-isomer_DH_CS1"/>
</dbReference>
<dbReference type="InterPro" id="IPR006140">
    <property type="entry name" value="D-isomer_DH_NAD-bd"/>
</dbReference>
<dbReference type="InterPro" id="IPR036291">
    <property type="entry name" value="NAD(P)-bd_dom_sf"/>
</dbReference>
<dbReference type="NCBIfam" id="NF006374">
    <property type="entry name" value="PRK08605.1"/>
    <property type="match status" value="1"/>
</dbReference>
<dbReference type="NCBIfam" id="NF009127">
    <property type="entry name" value="PRK12480.1"/>
    <property type="match status" value="1"/>
</dbReference>
<dbReference type="PANTHER" id="PTHR43026">
    <property type="entry name" value="2-HYDROXYACID DEHYDROGENASE HOMOLOG 1-RELATED"/>
    <property type="match status" value="1"/>
</dbReference>
<dbReference type="PANTHER" id="PTHR43026:SF1">
    <property type="entry name" value="2-HYDROXYACID DEHYDROGENASE HOMOLOG 1-RELATED"/>
    <property type="match status" value="1"/>
</dbReference>
<dbReference type="Pfam" id="PF00389">
    <property type="entry name" value="2-Hacid_dh"/>
    <property type="match status" value="1"/>
</dbReference>
<dbReference type="Pfam" id="PF02826">
    <property type="entry name" value="2-Hacid_dh_C"/>
    <property type="match status" value="1"/>
</dbReference>
<dbReference type="SUPFAM" id="SSF52283">
    <property type="entry name" value="Formate/glycerate dehydrogenase catalytic domain-like"/>
    <property type="match status" value="1"/>
</dbReference>
<dbReference type="SUPFAM" id="SSF51735">
    <property type="entry name" value="NAD(P)-binding Rossmann-fold domains"/>
    <property type="match status" value="1"/>
</dbReference>
<dbReference type="PROSITE" id="PS00065">
    <property type="entry name" value="D_2_HYDROXYACID_DH_1"/>
    <property type="match status" value="1"/>
</dbReference>
<dbReference type="PROSITE" id="PS00670">
    <property type="entry name" value="D_2_HYDROXYACID_DH_2"/>
    <property type="match status" value="1"/>
</dbReference>
<dbReference type="PROSITE" id="PS00671">
    <property type="entry name" value="D_2_HYDROXYACID_DH_3"/>
    <property type="match status" value="1"/>
</dbReference>
<protein>
    <recommendedName>
        <fullName>D-lactate dehydrogenase</fullName>
        <shortName>D-LDH</shortName>
        <ecNumber>1.1.1.28</ecNumber>
    </recommendedName>
    <alternativeName>
        <fullName>D-specific 2-hydroxyacid dehydrogenase</fullName>
    </alternativeName>
</protein>